<sequence>MDSGLYPKTGAPTWFYGWSKQREGGFSDFGSEIFRLRALPPLKAEIFRGIREVVEYNITGDSHPGYPWCKLGSDNKAVLTGFGDLIWDEVAKRFNNMLGYGDAIFSMTPSELVQNGICDAVKVFIKQEPHSLEKVNAGRLRIIAAVGLVDQIVTRLLCMKQNNAEIDCWESCPSAPGMGLNDEGLRTLYSTAQVMAEHGTICETDISGWDWSVQQWELDSDARLRTQLAGEEIGGYLNFFLRVHAYVVGHSVFVMPDGEMLEQTVPGGQLSGDYNTSSSNSRMRVIATMFARYLAGQVSGFPLLGIKAMGDDSFEIWFKGLEEYLGKMGHTVKMCVQRPGLVGFEFCSQVFLGLGIAYPVDFSKTLYRFLSHHPADPKYSEYRAQLMYYFRHLPSSTLQKVIRLAGARVERAQKLATSSN</sequence>
<feature type="chain" id="PRO_0000402444" description="RNA-directed RNA polymerase">
    <location>
        <begin position="1"/>
        <end position="420"/>
    </location>
</feature>
<feature type="domain" description="RdRp catalytic" evidence="1">
    <location>
        <begin position="199"/>
        <end position="325"/>
    </location>
</feature>
<evidence type="ECO:0000255" key="1">
    <source>
        <dbReference type="PROSITE-ProRule" id="PRU00539"/>
    </source>
</evidence>
<evidence type="ECO:0000305" key="2"/>
<reference key="1">
    <citation type="journal article" date="1994" name="Virology">
        <title>The nucleotide sequence and genome organization of mushroom bacilliform virus: a single-stranded RNA virus of Agaricus bisporus (Lange) Imbach.</title>
        <authorList>
            <person name="Revill P.A."/>
            <person name="Davidson A.D."/>
            <person name="Wright P.J."/>
        </authorList>
    </citation>
    <scope>NUCLEOTIDE SEQUENCE [GENOMIC RNA]</scope>
</reference>
<organism>
    <name type="scientific">Mushroom bacilliform virus (isolate Australia/AUS LF-1)</name>
    <name type="common">MBV</name>
    <dbReference type="NCBI Taxonomy" id="650482"/>
    <lineage>
        <taxon>Viruses</taxon>
        <taxon>Riboviria</taxon>
        <taxon>Orthornavirae</taxon>
        <taxon>Pisuviricota</taxon>
        <taxon>Pisoniviricetes</taxon>
        <taxon>Sobelivirales</taxon>
        <taxon>Barnaviridae</taxon>
        <taxon>Barnavirus</taxon>
        <taxon>Mushroom bacilliform virus</taxon>
    </lineage>
</organism>
<organismHost>
    <name type="scientific">Agaricus bisporus</name>
    <name type="common">White button mushroom</name>
    <dbReference type="NCBI Taxonomy" id="5341"/>
</organismHost>
<gene>
    <name type="ORF">ORF3</name>
</gene>
<comment type="function">
    <text evidence="2">RNA-dependent RNA polymerase which replicates the viral genome.</text>
</comment>
<comment type="catalytic activity">
    <reaction evidence="1">
        <text>RNA(n) + a ribonucleoside 5'-triphosphate = RNA(n+1) + diphosphate</text>
        <dbReference type="Rhea" id="RHEA:21248"/>
        <dbReference type="Rhea" id="RHEA-COMP:14527"/>
        <dbReference type="Rhea" id="RHEA-COMP:17342"/>
        <dbReference type="ChEBI" id="CHEBI:33019"/>
        <dbReference type="ChEBI" id="CHEBI:61557"/>
        <dbReference type="ChEBI" id="CHEBI:140395"/>
        <dbReference type="EC" id="2.7.7.48"/>
    </reaction>
</comment>
<comment type="PTM">
    <text evidence="2">Might be cleaved to release the mature protein(s).</text>
</comment>
<comment type="similarity">
    <text evidence="2">Belongs to the ssRNA positive-strand viruses RNA-directed RNA polymerase family.</text>
</comment>
<dbReference type="EC" id="2.7.7.48"/>
<dbReference type="EMBL" id="U07551">
    <property type="protein sequence ID" value="AAA53090.1"/>
    <property type="molecule type" value="Genomic_RNA"/>
</dbReference>
<dbReference type="RefSeq" id="NP_042510.2">
    <property type="nucleotide sequence ID" value="NC_001633.1"/>
</dbReference>
<dbReference type="SMR" id="Q9YPD5"/>
<dbReference type="KEGG" id="vg:1497107"/>
<dbReference type="Proteomes" id="UP000006824">
    <property type="component" value="Segment"/>
</dbReference>
<dbReference type="GO" id="GO:0000166">
    <property type="term" value="F:nucleotide binding"/>
    <property type="evidence" value="ECO:0007669"/>
    <property type="project" value="UniProtKB-KW"/>
</dbReference>
<dbReference type="GO" id="GO:0003723">
    <property type="term" value="F:RNA binding"/>
    <property type="evidence" value="ECO:0007669"/>
    <property type="project" value="InterPro"/>
</dbReference>
<dbReference type="GO" id="GO:0003968">
    <property type="term" value="F:RNA-directed RNA polymerase activity"/>
    <property type="evidence" value="ECO:0007669"/>
    <property type="project" value="UniProtKB-KW"/>
</dbReference>
<dbReference type="GO" id="GO:0006351">
    <property type="term" value="P:DNA-templated transcription"/>
    <property type="evidence" value="ECO:0007669"/>
    <property type="project" value="InterPro"/>
</dbReference>
<dbReference type="GO" id="GO:0039694">
    <property type="term" value="P:viral RNA genome replication"/>
    <property type="evidence" value="ECO:0007669"/>
    <property type="project" value="InterPro"/>
</dbReference>
<dbReference type="CDD" id="cd23184">
    <property type="entry name" value="ps-ssRNAv_Barnaviridae_RdRp"/>
    <property type="match status" value="1"/>
</dbReference>
<dbReference type="InterPro" id="IPR043502">
    <property type="entry name" value="DNA/RNA_pol_sf"/>
</dbReference>
<dbReference type="InterPro" id="IPR001795">
    <property type="entry name" value="RNA-dir_pol_luteovirus"/>
</dbReference>
<dbReference type="InterPro" id="IPR007094">
    <property type="entry name" value="RNA-dir_pol_PSvirus"/>
</dbReference>
<dbReference type="Pfam" id="PF02123">
    <property type="entry name" value="RdRP_4"/>
    <property type="match status" value="1"/>
</dbReference>
<dbReference type="PRINTS" id="PR00914">
    <property type="entry name" value="LVIRUSRNAPOL"/>
</dbReference>
<dbReference type="SUPFAM" id="SSF56672">
    <property type="entry name" value="DNA/RNA polymerases"/>
    <property type="match status" value="1"/>
</dbReference>
<dbReference type="PROSITE" id="PS50507">
    <property type="entry name" value="RDRP_SSRNA_POS"/>
    <property type="match status" value="1"/>
</dbReference>
<keyword id="KW-0547">Nucleotide-binding</keyword>
<keyword id="KW-0548">Nucleotidyltransferase</keyword>
<keyword id="KW-1185">Reference proteome</keyword>
<keyword id="KW-0696">RNA-directed RNA polymerase</keyword>
<keyword id="KW-0808">Transferase</keyword>
<keyword id="KW-0693">Viral RNA replication</keyword>
<protein>
    <recommendedName>
        <fullName>RNA-directed RNA polymerase</fullName>
        <ecNumber>2.7.7.48</ecNumber>
    </recommendedName>
</protein>
<accession>Q9YPD5</accession>
<name>RDRP_MBVLF</name>
<proteinExistence type="inferred from homology"/>